<organism>
    <name type="scientific">Psychromonas ingrahamii (strain DSM 17664 / CCUG 51855 / 37)</name>
    <dbReference type="NCBI Taxonomy" id="357804"/>
    <lineage>
        <taxon>Bacteria</taxon>
        <taxon>Pseudomonadati</taxon>
        <taxon>Pseudomonadota</taxon>
        <taxon>Gammaproteobacteria</taxon>
        <taxon>Alteromonadales</taxon>
        <taxon>Psychromonadaceae</taxon>
        <taxon>Psychromonas</taxon>
    </lineage>
</organism>
<feature type="chain" id="PRO_0000302967" description="S-adenosylmethionine synthase">
    <location>
        <begin position="1"/>
        <end position="382"/>
    </location>
</feature>
<feature type="region of interest" description="Flexible loop" evidence="1">
    <location>
        <begin position="99"/>
        <end position="109"/>
    </location>
</feature>
<feature type="binding site" description="in other chain" evidence="1">
    <location>
        <position position="15"/>
    </location>
    <ligand>
        <name>ATP</name>
        <dbReference type="ChEBI" id="CHEBI:30616"/>
        <note>ligand shared between two neighboring subunits</note>
    </ligand>
</feature>
<feature type="binding site" evidence="1">
    <location>
        <position position="17"/>
    </location>
    <ligand>
        <name>Mg(2+)</name>
        <dbReference type="ChEBI" id="CHEBI:18420"/>
    </ligand>
</feature>
<feature type="binding site" evidence="1">
    <location>
        <position position="43"/>
    </location>
    <ligand>
        <name>K(+)</name>
        <dbReference type="ChEBI" id="CHEBI:29103"/>
    </ligand>
</feature>
<feature type="binding site" description="in other chain" evidence="1">
    <location>
        <position position="56"/>
    </location>
    <ligand>
        <name>L-methionine</name>
        <dbReference type="ChEBI" id="CHEBI:57844"/>
        <note>ligand shared between two neighboring subunits</note>
    </ligand>
</feature>
<feature type="binding site" description="in other chain" evidence="1">
    <location>
        <position position="99"/>
    </location>
    <ligand>
        <name>L-methionine</name>
        <dbReference type="ChEBI" id="CHEBI:57844"/>
        <note>ligand shared between two neighboring subunits</note>
    </ligand>
</feature>
<feature type="binding site" description="in other chain" evidence="1">
    <location>
        <begin position="164"/>
        <end position="166"/>
    </location>
    <ligand>
        <name>ATP</name>
        <dbReference type="ChEBI" id="CHEBI:30616"/>
        <note>ligand shared between two neighboring subunits</note>
    </ligand>
</feature>
<feature type="binding site" description="in other chain" evidence="1">
    <location>
        <begin position="230"/>
        <end position="231"/>
    </location>
    <ligand>
        <name>ATP</name>
        <dbReference type="ChEBI" id="CHEBI:30616"/>
        <note>ligand shared between two neighboring subunits</note>
    </ligand>
</feature>
<feature type="binding site" evidence="1">
    <location>
        <position position="239"/>
    </location>
    <ligand>
        <name>ATP</name>
        <dbReference type="ChEBI" id="CHEBI:30616"/>
        <note>ligand shared between two neighboring subunits</note>
    </ligand>
</feature>
<feature type="binding site" evidence="1">
    <location>
        <position position="239"/>
    </location>
    <ligand>
        <name>L-methionine</name>
        <dbReference type="ChEBI" id="CHEBI:57844"/>
        <note>ligand shared between two neighboring subunits</note>
    </ligand>
</feature>
<feature type="binding site" description="in other chain" evidence="1">
    <location>
        <begin position="245"/>
        <end position="246"/>
    </location>
    <ligand>
        <name>ATP</name>
        <dbReference type="ChEBI" id="CHEBI:30616"/>
        <note>ligand shared between two neighboring subunits</note>
    </ligand>
</feature>
<feature type="binding site" evidence="1">
    <location>
        <position position="262"/>
    </location>
    <ligand>
        <name>ATP</name>
        <dbReference type="ChEBI" id="CHEBI:30616"/>
        <note>ligand shared between two neighboring subunits</note>
    </ligand>
</feature>
<feature type="binding site" evidence="1">
    <location>
        <position position="266"/>
    </location>
    <ligand>
        <name>ATP</name>
        <dbReference type="ChEBI" id="CHEBI:30616"/>
        <note>ligand shared between two neighboring subunits</note>
    </ligand>
</feature>
<feature type="binding site" description="in other chain" evidence="1">
    <location>
        <position position="270"/>
    </location>
    <ligand>
        <name>L-methionine</name>
        <dbReference type="ChEBI" id="CHEBI:57844"/>
        <note>ligand shared between two neighboring subunits</note>
    </ligand>
</feature>
<reference key="1">
    <citation type="journal article" date="2008" name="BMC Genomics">
        <title>Genomics of an extreme psychrophile, Psychromonas ingrahamii.</title>
        <authorList>
            <person name="Riley M."/>
            <person name="Staley J.T."/>
            <person name="Danchin A."/>
            <person name="Wang T.Z."/>
            <person name="Brettin T.S."/>
            <person name="Hauser L.J."/>
            <person name="Land M.L."/>
            <person name="Thompson L.S."/>
        </authorList>
    </citation>
    <scope>NUCLEOTIDE SEQUENCE [LARGE SCALE GENOMIC DNA]</scope>
    <source>
        <strain>DSM 17664 / CCUG 51855 / 37</strain>
    </source>
</reference>
<evidence type="ECO:0000255" key="1">
    <source>
        <dbReference type="HAMAP-Rule" id="MF_00086"/>
    </source>
</evidence>
<dbReference type="EC" id="2.5.1.6" evidence="1"/>
<dbReference type="EMBL" id="CP000510">
    <property type="protein sequence ID" value="ABM04914.1"/>
    <property type="molecule type" value="Genomic_DNA"/>
</dbReference>
<dbReference type="RefSeq" id="WP_011771466.1">
    <property type="nucleotide sequence ID" value="NC_008709.1"/>
</dbReference>
<dbReference type="SMR" id="A1SZJ9"/>
<dbReference type="STRING" id="357804.Ping_3227"/>
<dbReference type="KEGG" id="pin:Ping_3227"/>
<dbReference type="eggNOG" id="COG0192">
    <property type="taxonomic scope" value="Bacteria"/>
</dbReference>
<dbReference type="HOGENOM" id="CLU_041802_1_1_6"/>
<dbReference type="OrthoDB" id="9801686at2"/>
<dbReference type="UniPathway" id="UPA00315">
    <property type="reaction ID" value="UER00080"/>
</dbReference>
<dbReference type="Proteomes" id="UP000000639">
    <property type="component" value="Chromosome"/>
</dbReference>
<dbReference type="GO" id="GO:0005737">
    <property type="term" value="C:cytoplasm"/>
    <property type="evidence" value="ECO:0007669"/>
    <property type="project" value="UniProtKB-SubCell"/>
</dbReference>
<dbReference type="GO" id="GO:0005524">
    <property type="term" value="F:ATP binding"/>
    <property type="evidence" value="ECO:0007669"/>
    <property type="project" value="UniProtKB-UniRule"/>
</dbReference>
<dbReference type="GO" id="GO:0000287">
    <property type="term" value="F:magnesium ion binding"/>
    <property type="evidence" value="ECO:0007669"/>
    <property type="project" value="UniProtKB-UniRule"/>
</dbReference>
<dbReference type="GO" id="GO:0004478">
    <property type="term" value="F:methionine adenosyltransferase activity"/>
    <property type="evidence" value="ECO:0007669"/>
    <property type="project" value="UniProtKB-UniRule"/>
</dbReference>
<dbReference type="GO" id="GO:0006730">
    <property type="term" value="P:one-carbon metabolic process"/>
    <property type="evidence" value="ECO:0007669"/>
    <property type="project" value="UniProtKB-KW"/>
</dbReference>
<dbReference type="GO" id="GO:0006556">
    <property type="term" value="P:S-adenosylmethionine biosynthetic process"/>
    <property type="evidence" value="ECO:0007669"/>
    <property type="project" value="UniProtKB-UniRule"/>
</dbReference>
<dbReference type="CDD" id="cd18079">
    <property type="entry name" value="S-AdoMet_synt"/>
    <property type="match status" value="1"/>
</dbReference>
<dbReference type="FunFam" id="3.30.300.10:FF:000001">
    <property type="entry name" value="S-adenosylmethionine synthase"/>
    <property type="match status" value="1"/>
</dbReference>
<dbReference type="FunFam" id="3.30.300.10:FF:000003">
    <property type="entry name" value="S-adenosylmethionine synthase"/>
    <property type="match status" value="1"/>
</dbReference>
<dbReference type="Gene3D" id="3.30.300.10">
    <property type="match status" value="3"/>
</dbReference>
<dbReference type="HAMAP" id="MF_00086">
    <property type="entry name" value="S_AdoMet_synth1"/>
    <property type="match status" value="1"/>
</dbReference>
<dbReference type="InterPro" id="IPR022631">
    <property type="entry name" value="ADOMET_SYNTHASE_CS"/>
</dbReference>
<dbReference type="InterPro" id="IPR022630">
    <property type="entry name" value="S-AdoMet_synt_C"/>
</dbReference>
<dbReference type="InterPro" id="IPR022629">
    <property type="entry name" value="S-AdoMet_synt_central"/>
</dbReference>
<dbReference type="InterPro" id="IPR022628">
    <property type="entry name" value="S-AdoMet_synt_N"/>
</dbReference>
<dbReference type="InterPro" id="IPR002133">
    <property type="entry name" value="S-AdoMet_synthetase"/>
</dbReference>
<dbReference type="InterPro" id="IPR022636">
    <property type="entry name" value="S-AdoMet_synthetase_sfam"/>
</dbReference>
<dbReference type="NCBIfam" id="TIGR01034">
    <property type="entry name" value="metK"/>
    <property type="match status" value="1"/>
</dbReference>
<dbReference type="PANTHER" id="PTHR11964">
    <property type="entry name" value="S-ADENOSYLMETHIONINE SYNTHETASE"/>
    <property type="match status" value="1"/>
</dbReference>
<dbReference type="Pfam" id="PF02773">
    <property type="entry name" value="S-AdoMet_synt_C"/>
    <property type="match status" value="1"/>
</dbReference>
<dbReference type="Pfam" id="PF02772">
    <property type="entry name" value="S-AdoMet_synt_M"/>
    <property type="match status" value="1"/>
</dbReference>
<dbReference type="Pfam" id="PF00438">
    <property type="entry name" value="S-AdoMet_synt_N"/>
    <property type="match status" value="1"/>
</dbReference>
<dbReference type="PIRSF" id="PIRSF000497">
    <property type="entry name" value="MAT"/>
    <property type="match status" value="1"/>
</dbReference>
<dbReference type="SUPFAM" id="SSF55973">
    <property type="entry name" value="S-adenosylmethionine synthetase"/>
    <property type="match status" value="3"/>
</dbReference>
<dbReference type="PROSITE" id="PS00376">
    <property type="entry name" value="ADOMET_SYNTHASE_1"/>
    <property type="match status" value="1"/>
</dbReference>
<dbReference type="PROSITE" id="PS00377">
    <property type="entry name" value="ADOMET_SYNTHASE_2"/>
    <property type="match status" value="1"/>
</dbReference>
<keyword id="KW-0067">ATP-binding</keyword>
<keyword id="KW-0963">Cytoplasm</keyword>
<keyword id="KW-0460">Magnesium</keyword>
<keyword id="KW-0479">Metal-binding</keyword>
<keyword id="KW-0547">Nucleotide-binding</keyword>
<keyword id="KW-0554">One-carbon metabolism</keyword>
<keyword id="KW-0630">Potassium</keyword>
<keyword id="KW-1185">Reference proteome</keyword>
<keyword id="KW-0808">Transferase</keyword>
<name>METK_PSYIN</name>
<sequence>MSRDLFTSESVSEGHPDKIADQISDAVLDAILKQDKKARVACETYVKTGMVMVGGEITTDAWVDIEEITRNTVRNIGYTSSEMGFDADSCAILNVIGKQSPDINQGVDRSDPREQGAGDQGLMFGYATNETDVFMPAPITYAHHLVKRQAKVRKNKTLPWLRPDAKSQVTFAYDHGKIVGIDAVVLSTQHSEDIKQEDLVEAVMEEIIKPVLPAEWLSERTKYFINPTGRFVIGGPVGDCGLTGRKIIVDTYGGSARHGGGAFSGKDPSKVDRSAAYAARYVAKNIVAAGLADRCEIQVSYAIGVAEPTSISVETFGTEKVKKDLIIQLIREHFDLRPYGLIEMLNLIQPIYQSTAAYGHFGRNEFPWEALDKVEALKAGAF</sequence>
<accession>A1SZJ9</accession>
<comment type="function">
    <text evidence="1">Catalyzes the formation of S-adenosylmethionine (AdoMet) from methionine and ATP. The overall synthetic reaction is composed of two sequential steps, AdoMet formation and the subsequent tripolyphosphate hydrolysis which occurs prior to release of AdoMet from the enzyme.</text>
</comment>
<comment type="catalytic activity">
    <reaction evidence="1">
        <text>L-methionine + ATP + H2O = S-adenosyl-L-methionine + phosphate + diphosphate</text>
        <dbReference type="Rhea" id="RHEA:21080"/>
        <dbReference type="ChEBI" id="CHEBI:15377"/>
        <dbReference type="ChEBI" id="CHEBI:30616"/>
        <dbReference type="ChEBI" id="CHEBI:33019"/>
        <dbReference type="ChEBI" id="CHEBI:43474"/>
        <dbReference type="ChEBI" id="CHEBI:57844"/>
        <dbReference type="ChEBI" id="CHEBI:59789"/>
        <dbReference type="EC" id="2.5.1.6"/>
    </reaction>
</comment>
<comment type="cofactor">
    <cofactor evidence="1">
        <name>Mg(2+)</name>
        <dbReference type="ChEBI" id="CHEBI:18420"/>
    </cofactor>
    <text evidence="1">Binds 2 divalent ions per subunit.</text>
</comment>
<comment type="cofactor">
    <cofactor evidence="1">
        <name>K(+)</name>
        <dbReference type="ChEBI" id="CHEBI:29103"/>
    </cofactor>
    <text evidence="1">Binds 1 potassium ion per subunit.</text>
</comment>
<comment type="pathway">
    <text evidence="1">Amino-acid biosynthesis; S-adenosyl-L-methionine biosynthesis; S-adenosyl-L-methionine from L-methionine: step 1/1.</text>
</comment>
<comment type="subunit">
    <text evidence="1">Homotetramer; dimer of dimers.</text>
</comment>
<comment type="subcellular location">
    <subcellularLocation>
        <location evidence="1">Cytoplasm</location>
    </subcellularLocation>
</comment>
<comment type="similarity">
    <text evidence="1">Belongs to the AdoMet synthase family.</text>
</comment>
<protein>
    <recommendedName>
        <fullName evidence="1">S-adenosylmethionine synthase</fullName>
        <shortName evidence="1">AdoMet synthase</shortName>
        <ecNumber evidence="1">2.5.1.6</ecNumber>
    </recommendedName>
    <alternativeName>
        <fullName evidence="1">MAT</fullName>
    </alternativeName>
    <alternativeName>
        <fullName evidence="1">Methionine adenosyltransferase</fullName>
    </alternativeName>
</protein>
<proteinExistence type="inferred from homology"/>
<gene>
    <name evidence="1" type="primary">metK</name>
    <name type="ordered locus">Ping_3227</name>
</gene>